<name>S23A3_MOUSE</name>
<accession>Q60850</accession>
<accession>Q149H3</accession>
<accession>Q4VBX5</accession>
<accession>Q60851</accession>
<accession>Q60852</accession>
<accession>Q60853</accession>
<accession>Q78E82</accession>
<accession>Q78E83</accession>
<accession>Q78E84</accession>
<evidence type="ECO:0000250" key="1">
    <source>
        <dbReference type="UniProtKB" id="Q6PIS1"/>
    </source>
</evidence>
<evidence type="ECO:0000255" key="2"/>
<evidence type="ECO:0000256" key="3">
    <source>
        <dbReference type="SAM" id="MobiDB-lite"/>
    </source>
</evidence>
<evidence type="ECO:0000303" key="4">
    <source>
    </source>
</evidence>
<evidence type="ECO:0000305" key="5"/>
<keyword id="KW-0025">Alternative splicing</keyword>
<keyword id="KW-0963">Cytoplasm</keyword>
<keyword id="KW-0472">Membrane</keyword>
<keyword id="KW-1185">Reference proteome</keyword>
<keyword id="KW-0812">Transmembrane</keyword>
<keyword id="KW-1133">Transmembrane helix</keyword>
<reference key="1">
    <citation type="journal article" date="1995" name="Development">
        <title>A new approach to the study of haematopoietic development in the yolk sac and embryoid bodies.</title>
        <authorList>
            <person name="Guimaraes M.J."/>
            <person name="Bazan J.F."/>
            <person name="Zlotnik A."/>
            <person name="Wiles M.V."/>
            <person name="Grimaldi J.C."/>
            <person name="Lee F."/>
            <person name="McClanahan T."/>
        </authorList>
    </citation>
    <scope>NUCLEOTIDE SEQUENCE [MRNA] (ISOFORMS 1; 2; 3 AND 4)</scope>
    <scope>SUBCELLULAR LOCATION</scope>
    <source>
        <strain>BALB/cJ</strain>
        <tissue>Yolk sac</tissue>
    </source>
</reference>
<reference key="2">
    <citation type="journal article" date="2004" name="Genome Res.">
        <title>The status, quality, and expansion of the NIH full-length cDNA project: the Mammalian Gene Collection (MGC).</title>
        <authorList>
            <consortium name="The MGC Project Team"/>
        </authorList>
    </citation>
    <scope>NUCLEOTIDE SEQUENCE [LARGE SCALE MRNA] (ISOFORM 1)</scope>
    <source>
        <strain>C57BL/6J</strain>
        <tissue>Embryo</tissue>
    </source>
</reference>
<reference key="3">
    <citation type="journal article" date="2010" name="Cell">
        <title>A tissue-specific atlas of mouse protein phosphorylation and expression.</title>
        <authorList>
            <person name="Huttlin E.L."/>
            <person name="Jedrychowski M.P."/>
            <person name="Elias J.E."/>
            <person name="Goswami T."/>
            <person name="Rad R."/>
            <person name="Beausoleil S.A."/>
            <person name="Villen J."/>
            <person name="Haas W."/>
            <person name="Sowa M.E."/>
            <person name="Gygi S.P."/>
        </authorList>
    </citation>
    <scope>IDENTIFICATION BY MASS SPECTROMETRY [LARGE SCALE ANALYSIS]</scope>
    <source>
        <tissue>Kidney</tissue>
    </source>
</reference>
<dbReference type="EMBL" id="U25739">
    <property type="protein sequence ID" value="AAA92292.1"/>
    <property type="molecule type" value="mRNA"/>
</dbReference>
<dbReference type="EMBL" id="U25739">
    <property type="protein sequence ID" value="AAA92293.1"/>
    <property type="molecule type" value="mRNA"/>
</dbReference>
<dbReference type="EMBL" id="U25739">
    <property type="protein sequence ID" value="AAA92294.1"/>
    <property type="molecule type" value="mRNA"/>
</dbReference>
<dbReference type="EMBL" id="U25739">
    <property type="protein sequence ID" value="AAA92295.1"/>
    <property type="molecule type" value="mRNA"/>
</dbReference>
<dbReference type="EMBL" id="BC094893">
    <property type="protein sequence ID" value="AAH94893.1"/>
    <property type="status" value="ALT_FRAME"/>
    <property type="molecule type" value="mRNA"/>
</dbReference>
<dbReference type="EMBL" id="BC117790">
    <property type="protein sequence ID" value="AAI17791.1"/>
    <property type="molecule type" value="mRNA"/>
</dbReference>
<dbReference type="EMBL" id="BC117791">
    <property type="protein sequence ID" value="AAI17792.1"/>
    <property type="molecule type" value="mRNA"/>
</dbReference>
<dbReference type="CCDS" id="CCDS15062.1">
    <molecule id="Q60850-1"/>
</dbReference>
<dbReference type="RefSeq" id="NP_919314.2">
    <property type="nucleotide sequence ID" value="NM_194333.3"/>
</dbReference>
<dbReference type="SMR" id="Q60850"/>
<dbReference type="BioGRID" id="204618">
    <property type="interactions" value="1"/>
</dbReference>
<dbReference type="FunCoup" id="Q60850">
    <property type="interactions" value="1"/>
</dbReference>
<dbReference type="IntAct" id="Q60850">
    <property type="interactions" value="1"/>
</dbReference>
<dbReference type="STRING" id="10090.ENSMUSP00000027405"/>
<dbReference type="iPTMnet" id="Q60850"/>
<dbReference type="PhosphoSitePlus" id="Q60850"/>
<dbReference type="PaxDb" id="10090-ENSMUSP00000027405"/>
<dbReference type="ProteomicsDB" id="253368">
    <molecule id="Q60850-1"/>
</dbReference>
<dbReference type="ProteomicsDB" id="253369">
    <molecule id="Q60850-2"/>
</dbReference>
<dbReference type="ProteomicsDB" id="253370">
    <molecule id="Q60850-3"/>
</dbReference>
<dbReference type="ProteomicsDB" id="253371">
    <molecule id="Q60850-4"/>
</dbReference>
<dbReference type="DNASU" id="22626"/>
<dbReference type="GeneID" id="22626"/>
<dbReference type="KEGG" id="mmu:22626"/>
<dbReference type="UCSC" id="uc007bno.1">
    <molecule id="Q60850-1"/>
    <property type="organism name" value="mouse"/>
</dbReference>
<dbReference type="AGR" id="MGI:104516"/>
<dbReference type="CTD" id="151295"/>
<dbReference type="MGI" id="MGI:104516">
    <property type="gene designation" value="Slc23a3"/>
</dbReference>
<dbReference type="eggNOG" id="KOG1292">
    <property type="taxonomic scope" value="Eukaryota"/>
</dbReference>
<dbReference type="InParanoid" id="Q60850"/>
<dbReference type="OrthoDB" id="1641903at2759"/>
<dbReference type="PhylomeDB" id="Q60850"/>
<dbReference type="TreeFam" id="TF313272"/>
<dbReference type="BioGRID-ORCS" id="22626">
    <property type="hits" value="0 hits in 77 CRISPR screens"/>
</dbReference>
<dbReference type="ChiTaRS" id="Slc23a3">
    <property type="organism name" value="mouse"/>
</dbReference>
<dbReference type="PRO" id="PR:Q60850"/>
<dbReference type="Proteomes" id="UP000000589">
    <property type="component" value="Unplaced"/>
</dbReference>
<dbReference type="RNAct" id="Q60850">
    <property type="molecule type" value="protein"/>
</dbReference>
<dbReference type="GO" id="GO:0005737">
    <property type="term" value="C:cytoplasm"/>
    <property type="evidence" value="ECO:0007669"/>
    <property type="project" value="UniProtKB-SubCell"/>
</dbReference>
<dbReference type="GO" id="GO:0016020">
    <property type="term" value="C:membrane"/>
    <property type="evidence" value="ECO:0007669"/>
    <property type="project" value="UniProtKB-SubCell"/>
</dbReference>
<dbReference type="GO" id="GO:0022857">
    <property type="term" value="F:transmembrane transporter activity"/>
    <property type="evidence" value="ECO:0007669"/>
    <property type="project" value="InterPro"/>
</dbReference>
<dbReference type="GO" id="GO:0035344">
    <property type="term" value="P:hypoxanthine transport"/>
    <property type="evidence" value="ECO:0000250"/>
    <property type="project" value="UniProtKB"/>
</dbReference>
<dbReference type="InterPro" id="IPR006043">
    <property type="entry name" value="NCS2"/>
</dbReference>
<dbReference type="PANTHER" id="PTHR11119">
    <property type="entry name" value="XANTHINE-URACIL / VITAMIN C PERMEASE FAMILY MEMBER"/>
    <property type="match status" value="1"/>
</dbReference>
<dbReference type="Pfam" id="PF00860">
    <property type="entry name" value="Xan_ur_permease"/>
    <property type="match status" value="1"/>
</dbReference>
<proteinExistence type="evidence at protein level"/>
<feature type="chain" id="PRO_0000337204" description="Solute carrier family 23 member 3">
    <location>
        <begin position="1"/>
        <end position="611"/>
    </location>
</feature>
<feature type="topological domain" description="Cytoplasmic" evidence="2">
    <location>
        <begin position="1"/>
        <end position="52"/>
    </location>
</feature>
<feature type="transmembrane region" description="Helical" evidence="2">
    <location>
        <begin position="53"/>
        <end position="73"/>
    </location>
</feature>
<feature type="topological domain" description="Extracellular" evidence="2">
    <location>
        <begin position="74"/>
        <end position="88"/>
    </location>
</feature>
<feature type="transmembrane region" description="Helical" evidence="2">
    <location>
        <begin position="89"/>
        <end position="109"/>
    </location>
</feature>
<feature type="topological domain" description="Cytoplasmic" evidence="2">
    <location>
        <begin position="110"/>
        <end position="168"/>
    </location>
</feature>
<feature type="transmembrane region" description="Helical" evidence="2">
    <location>
        <begin position="169"/>
        <end position="189"/>
    </location>
</feature>
<feature type="topological domain" description="Extracellular" evidence="2">
    <location>
        <begin position="190"/>
        <end position="191"/>
    </location>
</feature>
<feature type="transmembrane region" description="Helical" evidence="2">
    <location>
        <begin position="192"/>
        <end position="212"/>
    </location>
</feature>
<feature type="topological domain" description="Cytoplasmic" evidence="2">
    <location>
        <begin position="213"/>
        <end position="215"/>
    </location>
</feature>
<feature type="transmembrane region" description="Helical" evidence="2">
    <location>
        <begin position="216"/>
        <end position="236"/>
    </location>
</feature>
<feature type="topological domain" description="Extracellular" evidence="2">
    <location>
        <begin position="237"/>
        <end position="269"/>
    </location>
</feature>
<feature type="transmembrane region" description="Helical" evidence="2">
    <location>
        <begin position="270"/>
        <end position="290"/>
    </location>
</feature>
<feature type="topological domain" description="Cytoplasmic" evidence="2">
    <location>
        <begin position="291"/>
        <end position="319"/>
    </location>
</feature>
<feature type="transmembrane region" description="Helical" evidence="2">
    <location>
        <begin position="320"/>
        <end position="340"/>
    </location>
</feature>
<feature type="topological domain" description="Extracellular" evidence="2">
    <location>
        <begin position="341"/>
        <end position="358"/>
    </location>
</feature>
<feature type="transmembrane region" description="Helical" evidence="2">
    <location>
        <begin position="359"/>
        <end position="379"/>
    </location>
</feature>
<feature type="topological domain" description="Cytoplasmic" evidence="2">
    <location>
        <begin position="380"/>
        <end position="397"/>
    </location>
</feature>
<feature type="transmembrane region" description="Helical" evidence="2">
    <location>
        <begin position="398"/>
        <end position="417"/>
    </location>
</feature>
<feature type="topological domain" description="Extracellular" evidence="2">
    <location>
        <begin position="418"/>
        <end position="426"/>
    </location>
</feature>
<feature type="transmembrane region" description="Helical" evidence="2">
    <location>
        <begin position="427"/>
        <end position="449"/>
    </location>
</feature>
<feature type="topological domain" description="Cytoplasmic" evidence="2">
    <location>
        <begin position="450"/>
        <end position="455"/>
    </location>
</feature>
<feature type="transmembrane region" description="Helical" evidence="2">
    <location>
        <begin position="456"/>
        <end position="475"/>
    </location>
</feature>
<feature type="topological domain" description="Extracellular" evidence="2">
    <location>
        <begin position="476"/>
        <end position="489"/>
    </location>
</feature>
<feature type="transmembrane region" description="Helical" evidence="2">
    <location>
        <begin position="490"/>
        <end position="510"/>
    </location>
</feature>
<feature type="topological domain" description="Cytoplasmic" evidence="2">
    <location>
        <begin position="511"/>
        <end position="611"/>
    </location>
</feature>
<feature type="region of interest" description="Disordered" evidence="3">
    <location>
        <begin position="574"/>
        <end position="611"/>
    </location>
</feature>
<feature type="compositionally biased region" description="Polar residues" evidence="3">
    <location>
        <begin position="596"/>
        <end position="605"/>
    </location>
</feature>
<feature type="splice variant" id="VSP_033977" description="In isoform 4." evidence="4">
    <location>
        <begin position="1"/>
        <end position="537"/>
    </location>
</feature>
<feature type="splice variant" id="VSP_033976" description="In isoform 3." evidence="4">
    <location>
        <begin position="1"/>
        <end position="489"/>
    </location>
</feature>
<feature type="splice variant" id="VSP_033975" description="In isoform 2." evidence="4">
    <location>
        <begin position="1"/>
        <end position="106"/>
    </location>
</feature>
<feature type="sequence conflict" description="In Ref. 2; AAH94893/AAI17791/AAI17792." evidence="5" ref="2">
    <original>F</original>
    <variation>C</variation>
    <location>
        <position position="43"/>
    </location>
</feature>
<feature type="sequence conflict" description="In Ref. 2; AAH94893/AAI17791/AAI17792." evidence="5" ref="2">
    <original>K</original>
    <variation>R</variation>
    <location>
        <position position="557"/>
    </location>
</feature>
<protein>
    <recommendedName>
        <fullName>Solute carrier family 23 member 3</fullName>
    </recommendedName>
    <alternativeName>
        <fullName>Na(+)/L-ascorbic acid transporter 3</fullName>
    </alternativeName>
    <alternativeName>
        <fullName>Sodium-dependent vitamin C transporter 3</fullName>
    </alternativeName>
    <alternativeName>
        <fullName>Yolk sac permease-like molecule 1</fullName>
        <shortName>YSPL-1</shortName>
    </alternativeName>
</protein>
<sequence length="611" mass="64878">MSRSPLHPIPLLSEGYQDTPAPLPPLLPPLQNPSSRSWASRVFGPSTWGLSCLLALQHFLVLASLLWASHLLLLHGLPPGGLSYPPAQLLASSFFSCGLSTVLQTWMGSRLPLIQAPSLEFLIPALVLTNQKLPLTTKTPGNASLSLPLCSLTRSCHGLELWNTSLREVSGAVVVSGLLQGTIGLLGVPGRVFPYCGPLVLAPSLVVAGLSAHKEVAQFCSAHWGLALLLILLMVVCSQHLGSCQIPLCSWRPSSTSTHICIPVFRLLSVLAPVACVWFISAFVGTSVIPLQLSEPSDAPWFWLPHPGEWEWPLLTPRALAAGISMALAASTSSLGCYALCGQLLRLSPPPPHACSRGLSLEGLGSVLAGLLGSPLGTASSFPNVGTVSLFQTGSRRVAHLVGLFCMGLGLSPRLAQLFTSIPLPVLGGVLGVTQAVVLSAGFSSFHLADIDSGRNVFIVGFSIFMALLLPRWLREAPVLLNTGWSPLDMFLRSLLAEPIFLAGLLGFLLENTISGTRAERGLGQRLPTSFTAQEIQMLQQSRRKAAQEYGLPLPIKNLCSCIPQPLHCLCPMPEDSGDEGGSSKTGERADLLPNSGESYSTASREGVRSQ</sequence>
<organism>
    <name type="scientific">Mus musculus</name>
    <name type="common">Mouse</name>
    <dbReference type="NCBI Taxonomy" id="10090"/>
    <lineage>
        <taxon>Eukaryota</taxon>
        <taxon>Metazoa</taxon>
        <taxon>Chordata</taxon>
        <taxon>Craniata</taxon>
        <taxon>Vertebrata</taxon>
        <taxon>Euteleostomi</taxon>
        <taxon>Mammalia</taxon>
        <taxon>Eutheria</taxon>
        <taxon>Euarchontoglires</taxon>
        <taxon>Glires</taxon>
        <taxon>Rodentia</taxon>
        <taxon>Myomorpha</taxon>
        <taxon>Muroidea</taxon>
        <taxon>Muridae</taxon>
        <taxon>Murinae</taxon>
        <taxon>Mus</taxon>
        <taxon>Mus</taxon>
    </lineage>
</organism>
<comment type="function">
    <text evidence="1">Acts as a sodium-dependent hypoxanthine transporter. May show xanthine-hypoxanthine exchange activity.</text>
</comment>
<comment type="catalytic activity">
    <reaction evidence="1">
        <text>hypoxanthine(out) + Na(+)(out) = hypoxanthine(in) + Na(+)(in)</text>
        <dbReference type="Rhea" id="RHEA:76279"/>
        <dbReference type="ChEBI" id="CHEBI:17368"/>
        <dbReference type="ChEBI" id="CHEBI:29101"/>
    </reaction>
</comment>
<comment type="subcellular location">
    <subcellularLocation>
        <location evidence="5">Membrane</location>
        <topology evidence="2">Multi-pass membrane protein</topology>
    </subcellularLocation>
</comment>
<comment type="subcellular location">
    <molecule>Isoform 4</molecule>
    <subcellularLocation>
        <location>Cytoplasm</location>
    </subcellularLocation>
</comment>
<comment type="alternative products">
    <event type="alternative splicing"/>
    <isoform>
        <id>Q60850-1</id>
        <name>1</name>
        <name>YSPL-1 form 1</name>
        <sequence type="displayed"/>
    </isoform>
    <isoform>
        <id>Q60850-2</id>
        <name>2</name>
        <name>YSPL-1 form 2</name>
        <sequence type="described" ref="VSP_033975"/>
    </isoform>
    <isoform>
        <id>Q60850-3</id>
        <name>3</name>
        <name>YSPL-1 form 3</name>
        <sequence type="described" ref="VSP_033976"/>
    </isoform>
    <isoform>
        <id>Q60850-4</id>
        <name>4</name>
        <name>YSPL-1 form 4</name>
        <sequence type="described" ref="VSP_033977"/>
    </isoform>
</comment>
<comment type="similarity">
    <text evidence="5">Belongs to the nucleobase:cation symporter-2 (NCS2) (TC 2.A.40) family.</text>
</comment>
<comment type="sequence caution" evidence="5">
    <conflict type="frameshift">
        <sequence resource="EMBL-CDS" id="AAH94893"/>
    </conflict>
</comment>
<gene>
    <name type="primary">Slc23a3</name>
    <name type="synonym">Svct3</name>
    <name type="synonym">Yspl1</name>
</gene>